<feature type="chain" id="PRO_0000230551" description="Small ribosomal subunit protein uS13">
    <location>
        <begin position="1"/>
        <end position="118"/>
    </location>
</feature>
<feature type="region of interest" description="Disordered" evidence="2">
    <location>
        <begin position="93"/>
        <end position="118"/>
    </location>
</feature>
<dbReference type="EMBL" id="CP000076">
    <property type="protein sequence ID" value="AAY94767.1"/>
    <property type="molecule type" value="Genomic_DNA"/>
</dbReference>
<dbReference type="RefSeq" id="WP_003186020.1">
    <property type="nucleotide sequence ID" value="NC_004129.6"/>
</dbReference>
<dbReference type="SMR" id="Q4K554"/>
<dbReference type="STRING" id="220664.PFL_5561"/>
<dbReference type="GeneID" id="98113685"/>
<dbReference type="KEGG" id="pfl:PFL_5561"/>
<dbReference type="eggNOG" id="COG0099">
    <property type="taxonomic scope" value="Bacteria"/>
</dbReference>
<dbReference type="HOGENOM" id="CLU_103849_1_2_6"/>
<dbReference type="Proteomes" id="UP000008540">
    <property type="component" value="Chromosome"/>
</dbReference>
<dbReference type="GO" id="GO:0005829">
    <property type="term" value="C:cytosol"/>
    <property type="evidence" value="ECO:0007669"/>
    <property type="project" value="TreeGrafter"/>
</dbReference>
<dbReference type="GO" id="GO:0015935">
    <property type="term" value="C:small ribosomal subunit"/>
    <property type="evidence" value="ECO:0007669"/>
    <property type="project" value="TreeGrafter"/>
</dbReference>
<dbReference type="GO" id="GO:0019843">
    <property type="term" value="F:rRNA binding"/>
    <property type="evidence" value="ECO:0007669"/>
    <property type="project" value="UniProtKB-UniRule"/>
</dbReference>
<dbReference type="GO" id="GO:0003735">
    <property type="term" value="F:structural constituent of ribosome"/>
    <property type="evidence" value="ECO:0007669"/>
    <property type="project" value="InterPro"/>
</dbReference>
<dbReference type="GO" id="GO:0000049">
    <property type="term" value="F:tRNA binding"/>
    <property type="evidence" value="ECO:0007669"/>
    <property type="project" value="UniProtKB-UniRule"/>
</dbReference>
<dbReference type="GO" id="GO:0006412">
    <property type="term" value="P:translation"/>
    <property type="evidence" value="ECO:0007669"/>
    <property type="project" value="UniProtKB-UniRule"/>
</dbReference>
<dbReference type="FunFam" id="1.10.8.50:FF:000001">
    <property type="entry name" value="30S ribosomal protein S13"/>
    <property type="match status" value="1"/>
</dbReference>
<dbReference type="FunFam" id="4.10.910.10:FF:000001">
    <property type="entry name" value="30S ribosomal protein S13"/>
    <property type="match status" value="1"/>
</dbReference>
<dbReference type="Gene3D" id="1.10.8.50">
    <property type="match status" value="1"/>
</dbReference>
<dbReference type="Gene3D" id="4.10.910.10">
    <property type="entry name" value="30s ribosomal protein s13, domain 2"/>
    <property type="match status" value="1"/>
</dbReference>
<dbReference type="HAMAP" id="MF_01315">
    <property type="entry name" value="Ribosomal_uS13"/>
    <property type="match status" value="1"/>
</dbReference>
<dbReference type="InterPro" id="IPR027437">
    <property type="entry name" value="Rbsml_uS13_C"/>
</dbReference>
<dbReference type="InterPro" id="IPR001892">
    <property type="entry name" value="Ribosomal_uS13"/>
</dbReference>
<dbReference type="InterPro" id="IPR010979">
    <property type="entry name" value="Ribosomal_uS13-like_H2TH"/>
</dbReference>
<dbReference type="InterPro" id="IPR019980">
    <property type="entry name" value="Ribosomal_uS13_bac-type"/>
</dbReference>
<dbReference type="InterPro" id="IPR018269">
    <property type="entry name" value="Ribosomal_uS13_CS"/>
</dbReference>
<dbReference type="NCBIfam" id="TIGR03631">
    <property type="entry name" value="uS13_bact"/>
    <property type="match status" value="1"/>
</dbReference>
<dbReference type="PANTHER" id="PTHR10871">
    <property type="entry name" value="30S RIBOSOMAL PROTEIN S13/40S RIBOSOMAL PROTEIN S18"/>
    <property type="match status" value="1"/>
</dbReference>
<dbReference type="PANTHER" id="PTHR10871:SF1">
    <property type="entry name" value="SMALL RIBOSOMAL SUBUNIT PROTEIN US13M"/>
    <property type="match status" value="1"/>
</dbReference>
<dbReference type="Pfam" id="PF00416">
    <property type="entry name" value="Ribosomal_S13"/>
    <property type="match status" value="1"/>
</dbReference>
<dbReference type="PIRSF" id="PIRSF002134">
    <property type="entry name" value="Ribosomal_S13"/>
    <property type="match status" value="1"/>
</dbReference>
<dbReference type="SUPFAM" id="SSF46946">
    <property type="entry name" value="S13-like H2TH domain"/>
    <property type="match status" value="1"/>
</dbReference>
<dbReference type="PROSITE" id="PS00646">
    <property type="entry name" value="RIBOSOMAL_S13_1"/>
    <property type="match status" value="1"/>
</dbReference>
<dbReference type="PROSITE" id="PS50159">
    <property type="entry name" value="RIBOSOMAL_S13_2"/>
    <property type="match status" value="1"/>
</dbReference>
<gene>
    <name evidence="1" type="primary">rpsM</name>
    <name type="ordered locus">PFL_5561</name>
</gene>
<proteinExistence type="inferred from homology"/>
<evidence type="ECO:0000255" key="1">
    <source>
        <dbReference type="HAMAP-Rule" id="MF_01315"/>
    </source>
</evidence>
<evidence type="ECO:0000256" key="2">
    <source>
        <dbReference type="SAM" id="MobiDB-lite"/>
    </source>
</evidence>
<evidence type="ECO:0000305" key="3"/>
<name>RS13_PSEF5</name>
<reference key="1">
    <citation type="journal article" date="2005" name="Nat. Biotechnol.">
        <title>Complete genome sequence of the plant commensal Pseudomonas fluorescens Pf-5.</title>
        <authorList>
            <person name="Paulsen I.T."/>
            <person name="Press C.M."/>
            <person name="Ravel J."/>
            <person name="Kobayashi D.Y."/>
            <person name="Myers G.S.A."/>
            <person name="Mavrodi D.V."/>
            <person name="DeBoy R.T."/>
            <person name="Seshadri R."/>
            <person name="Ren Q."/>
            <person name="Madupu R."/>
            <person name="Dodson R.J."/>
            <person name="Durkin A.S."/>
            <person name="Brinkac L.M."/>
            <person name="Daugherty S.C."/>
            <person name="Sullivan S.A."/>
            <person name="Rosovitz M.J."/>
            <person name="Gwinn M.L."/>
            <person name="Zhou L."/>
            <person name="Schneider D.J."/>
            <person name="Cartinhour S.W."/>
            <person name="Nelson W.C."/>
            <person name="Weidman J."/>
            <person name="Watkins K."/>
            <person name="Tran K."/>
            <person name="Khouri H."/>
            <person name="Pierson E.A."/>
            <person name="Pierson L.S. III"/>
            <person name="Thomashow L.S."/>
            <person name="Loper J.E."/>
        </authorList>
    </citation>
    <scope>NUCLEOTIDE SEQUENCE [LARGE SCALE GENOMIC DNA]</scope>
    <source>
        <strain>ATCC BAA-477 / NRRL B-23932 / Pf-5</strain>
    </source>
</reference>
<protein>
    <recommendedName>
        <fullName evidence="1">Small ribosomal subunit protein uS13</fullName>
    </recommendedName>
    <alternativeName>
        <fullName evidence="3">30S ribosomal protein S13</fullName>
    </alternativeName>
</protein>
<sequence>MARIAGVNIPDNKHTVISLTYIYGVGRTTAQKICAVTGVNPAAKIKDLSDEQIEQLRGEVAKFTTEGDLRREINMKIKRLMDLGCYRGLRHRRGLPVRGQRTKTNARTRKGPRKPIRK</sequence>
<organism>
    <name type="scientific">Pseudomonas fluorescens (strain ATCC BAA-477 / NRRL B-23932 / Pf-5)</name>
    <dbReference type="NCBI Taxonomy" id="220664"/>
    <lineage>
        <taxon>Bacteria</taxon>
        <taxon>Pseudomonadati</taxon>
        <taxon>Pseudomonadota</taxon>
        <taxon>Gammaproteobacteria</taxon>
        <taxon>Pseudomonadales</taxon>
        <taxon>Pseudomonadaceae</taxon>
        <taxon>Pseudomonas</taxon>
    </lineage>
</organism>
<keyword id="KW-0687">Ribonucleoprotein</keyword>
<keyword id="KW-0689">Ribosomal protein</keyword>
<keyword id="KW-0694">RNA-binding</keyword>
<keyword id="KW-0699">rRNA-binding</keyword>
<keyword id="KW-0820">tRNA-binding</keyword>
<accession>Q4K554</accession>
<comment type="function">
    <text evidence="1">Located at the top of the head of the 30S subunit, it contacts several helices of the 16S rRNA. In the 70S ribosome it contacts the 23S rRNA (bridge B1a) and protein L5 of the 50S subunit (bridge B1b), connecting the 2 subunits; these bridges are implicated in subunit movement. Contacts the tRNAs in the A and P-sites.</text>
</comment>
<comment type="subunit">
    <text evidence="1">Part of the 30S ribosomal subunit. Forms a loose heterodimer with protein S19. Forms two bridges to the 50S subunit in the 70S ribosome.</text>
</comment>
<comment type="similarity">
    <text evidence="1">Belongs to the universal ribosomal protein uS13 family.</text>
</comment>